<dbReference type="EMBL" id="CP000742">
    <property type="protein sequence ID" value="ABR54991.1"/>
    <property type="molecule type" value="Genomic_DNA"/>
</dbReference>
<dbReference type="RefSeq" id="WP_012065906.1">
    <property type="nucleotide sequence ID" value="NC_009634.1"/>
</dbReference>
<dbReference type="SMR" id="A6UR69"/>
<dbReference type="STRING" id="406327.Mevan_1091"/>
<dbReference type="GeneID" id="5325215"/>
<dbReference type="KEGG" id="mvn:Mevan_1091"/>
<dbReference type="eggNOG" id="arCOG00028">
    <property type="taxonomic scope" value="Archaea"/>
</dbReference>
<dbReference type="HOGENOM" id="CLU_111001_0_0_2"/>
<dbReference type="OrthoDB" id="68893at2157"/>
<dbReference type="Proteomes" id="UP000001107">
    <property type="component" value="Chromosome"/>
</dbReference>
<dbReference type="GO" id="GO:0003677">
    <property type="term" value="F:DNA binding"/>
    <property type="evidence" value="ECO:0007669"/>
    <property type="project" value="UniProtKB-UniRule"/>
</dbReference>
<dbReference type="GO" id="GO:0004588">
    <property type="term" value="F:orotate phosphoribosyltransferase activity"/>
    <property type="evidence" value="ECO:0007669"/>
    <property type="project" value="TreeGrafter"/>
</dbReference>
<dbReference type="GO" id="GO:0019856">
    <property type="term" value="P:pyrimidine nucleobase biosynthetic process"/>
    <property type="evidence" value="ECO:0007669"/>
    <property type="project" value="TreeGrafter"/>
</dbReference>
<dbReference type="GO" id="GO:0010468">
    <property type="term" value="P:regulation of gene expression"/>
    <property type="evidence" value="ECO:0007669"/>
    <property type="project" value="UniProtKB-UniRule"/>
</dbReference>
<dbReference type="GO" id="GO:0006222">
    <property type="term" value="P:UMP biosynthetic process"/>
    <property type="evidence" value="ECO:0007669"/>
    <property type="project" value="TreeGrafter"/>
</dbReference>
<dbReference type="CDD" id="cd06223">
    <property type="entry name" value="PRTases_typeI"/>
    <property type="match status" value="1"/>
</dbReference>
<dbReference type="Gene3D" id="3.40.50.2020">
    <property type="match status" value="1"/>
</dbReference>
<dbReference type="HAMAP" id="MF_01214">
    <property type="entry name" value="GfcR"/>
    <property type="match status" value="1"/>
</dbReference>
<dbReference type="InterPro" id="IPR022854">
    <property type="entry name" value="GfcR-like"/>
</dbReference>
<dbReference type="InterPro" id="IPR000836">
    <property type="entry name" value="PRibTrfase_dom"/>
</dbReference>
<dbReference type="InterPro" id="IPR029057">
    <property type="entry name" value="PRTase-like"/>
</dbReference>
<dbReference type="NCBIfam" id="NF002620">
    <property type="entry name" value="PRK02277.1"/>
    <property type="match status" value="1"/>
</dbReference>
<dbReference type="PANTHER" id="PTHR19278">
    <property type="entry name" value="OROTATE PHOSPHORIBOSYLTRANSFERASE"/>
    <property type="match status" value="1"/>
</dbReference>
<dbReference type="PANTHER" id="PTHR19278:SF41">
    <property type="entry name" value="PYRE-LIKE PROTEIN"/>
    <property type="match status" value="1"/>
</dbReference>
<dbReference type="Pfam" id="PF00156">
    <property type="entry name" value="Pribosyltran"/>
    <property type="match status" value="1"/>
</dbReference>
<dbReference type="SUPFAM" id="SSF53271">
    <property type="entry name" value="PRTase-like"/>
    <property type="match status" value="1"/>
</dbReference>
<dbReference type="PROSITE" id="PS00103">
    <property type="entry name" value="PUR_PYR_PR_TRANSFER"/>
    <property type="match status" value="1"/>
</dbReference>
<sequence length="205" mass="22624">MKKELIYKALKLRDMGFPSGDIAEELNISVKTALYLTLNGEDLLKSTESPKEDSEKADIFLEWDSVRASSKRLKHIAKIMCDILGQVEFDGIVGISSGGVPLATLISDEMDKNFSIFVPKKHIHTEKEKTTGFIGQNFSSIVGKDVIIVDDVMTSGNAVKEAIKYLKSISNPKMVVVVMDKSGIDEIDGVPVHHLFRTGIVDIKK</sequence>
<protein>
    <recommendedName>
        <fullName evidence="1">Transcriptional regulator GfcR</fullName>
    </recommendedName>
</protein>
<feature type="chain" id="PRO_1000066452" description="Transcriptional regulator GfcR">
    <location>
        <begin position="1"/>
        <end position="205"/>
    </location>
</feature>
<proteinExistence type="inferred from homology"/>
<accession>A6UR69</accession>
<evidence type="ECO:0000255" key="1">
    <source>
        <dbReference type="HAMAP-Rule" id="MF_01214"/>
    </source>
</evidence>
<gene>
    <name evidence="1" type="primary">gfcR</name>
    <name type="ordered locus">Mevan_1091</name>
</gene>
<reference key="1">
    <citation type="submission" date="2007-06" db="EMBL/GenBank/DDBJ databases">
        <title>Complete sequence of Methanococcus vannielii SB.</title>
        <authorList>
            <consortium name="US DOE Joint Genome Institute"/>
            <person name="Copeland A."/>
            <person name="Lucas S."/>
            <person name="Lapidus A."/>
            <person name="Barry K."/>
            <person name="Glavina del Rio T."/>
            <person name="Dalin E."/>
            <person name="Tice H."/>
            <person name="Pitluck S."/>
            <person name="Chain P."/>
            <person name="Malfatti S."/>
            <person name="Shin M."/>
            <person name="Vergez L."/>
            <person name="Schmutz J."/>
            <person name="Larimer F."/>
            <person name="Land M."/>
            <person name="Hauser L."/>
            <person name="Kyrpides N."/>
            <person name="Anderson I."/>
            <person name="Sieprawska-Lupa M."/>
            <person name="Whitman W.B."/>
            <person name="Richardson P."/>
        </authorList>
    </citation>
    <scope>NUCLEOTIDE SEQUENCE [LARGE SCALE GENOMIC DNA]</scope>
    <source>
        <strain>ATCC 35089 / DSM 1224 / JCM 13029 / OCM 148 / SB</strain>
    </source>
</reference>
<organism>
    <name type="scientific">Methanococcus vannielii (strain ATCC 35089 / DSM 1224 / JCM 13029 / OCM 148 / SB)</name>
    <dbReference type="NCBI Taxonomy" id="406327"/>
    <lineage>
        <taxon>Archaea</taxon>
        <taxon>Methanobacteriati</taxon>
        <taxon>Methanobacteriota</taxon>
        <taxon>Methanomada group</taxon>
        <taxon>Methanococci</taxon>
        <taxon>Methanococcales</taxon>
        <taxon>Methanococcaceae</taxon>
        <taxon>Methanococcus</taxon>
    </lineage>
</organism>
<keyword id="KW-0238">DNA-binding</keyword>
<keyword id="KW-0804">Transcription</keyword>
<keyword id="KW-0805">Transcription regulation</keyword>
<comment type="domain">
    <text evidence="1">Contains an N-terminal DNA-binding winged helix-turn-helix domain and a C-terminal regulatory domain (or effector binding domain) resembling phosphoribosyltransferase (PRT) domain.</text>
</comment>
<comment type="similarity">
    <text evidence="1">Belongs to the purine/pyrimidine phosphoribosyltransferase family. GfcR subfamily.</text>
</comment>
<name>GFCR_METVS</name>